<organism>
    <name type="scientific">Oryza sativa subsp. japonica</name>
    <name type="common">Rice</name>
    <dbReference type="NCBI Taxonomy" id="39947"/>
    <lineage>
        <taxon>Eukaryota</taxon>
        <taxon>Viridiplantae</taxon>
        <taxon>Streptophyta</taxon>
        <taxon>Embryophyta</taxon>
        <taxon>Tracheophyta</taxon>
        <taxon>Spermatophyta</taxon>
        <taxon>Magnoliopsida</taxon>
        <taxon>Liliopsida</taxon>
        <taxon>Poales</taxon>
        <taxon>Poaceae</taxon>
        <taxon>BOP clade</taxon>
        <taxon>Oryzoideae</taxon>
        <taxon>Oryzeae</taxon>
        <taxon>Oryzinae</taxon>
        <taxon>Oryza</taxon>
        <taxon>Oryza sativa</taxon>
    </lineage>
</organism>
<gene>
    <name type="ordered locus">Os11g0169200</name>
    <name type="ordered locus">LOC_Os11g06820</name>
</gene>
<keyword id="KW-0029">Amino-acid transport</keyword>
<keyword id="KW-0927">Auxin signaling pathway</keyword>
<keyword id="KW-1003">Cell membrane</keyword>
<keyword id="KW-0472">Membrane</keyword>
<keyword id="KW-1185">Reference proteome</keyword>
<keyword id="KW-0769">Symport</keyword>
<keyword id="KW-0812">Transmembrane</keyword>
<keyword id="KW-1133">Transmembrane helix</keyword>
<keyword id="KW-0813">Transport</keyword>
<protein>
    <recommendedName>
        <fullName>Putative auxin transporter-like protein 4</fullName>
    </recommendedName>
</protein>
<sequence>MASEKVETIVAGNYVEMEREGAATAGEGVGGAAAASGRRRGKLAVSSLFWHGGSVYDAWFSCASNQVAQVLLTLPYSFSQLGMASGVAFQVFYGLMGSWTAYLISVLYVEYRTRRERDKVDFRNHVIQWFEVLDGLLGRHWRNAGLLFNCTFLLFGSVIQLIACASNIYYINDRLDKRTWTYIFGACCATTVFVPSFHNYRVWSFLGLLMTSYTAWYLTVAAVVHGKVDGAAPRAGPSKTMVLYFTGATNILYTFGGHAVTVEIMHAMWRPRRFKMIYLAATAYVLTLTLPSAAAMYWAFGDALLDHSNAFALLPRTPWRDAAVVLMLIHQFITFGFACTPLYFVWEKAIGVHGGAGVLRRAAARLPVVLPIWFLAVIFPFFGPINSTVGSFLVSFTVYIIPAMAHMATFAPAAARENAVEPPPRALGGWPGTFAANCFVVAWVLVVGFGFGGWASTVNFVRQVDTFGLFTKCYQCPPRH</sequence>
<accession>Q53JG7</accession>
<accession>A0A0P0XZ88</accession>
<accession>Q2RA22</accession>
<feature type="chain" id="PRO_0000093853" description="Putative auxin transporter-like protein 4">
    <location>
        <begin position="1"/>
        <end position="480"/>
    </location>
</feature>
<feature type="topological domain" description="Cytoplasmic" evidence="2">
    <location>
        <begin position="1"/>
        <end position="66"/>
    </location>
</feature>
<feature type="transmembrane region" description="Helical" evidence="2">
    <location>
        <begin position="67"/>
        <end position="84"/>
    </location>
</feature>
<feature type="topological domain" description="Extracellular" evidence="2">
    <location>
        <begin position="85"/>
        <end position="86"/>
    </location>
</feature>
<feature type="transmembrane region" description="Helical" evidence="2">
    <location>
        <begin position="87"/>
        <end position="107"/>
    </location>
</feature>
<feature type="topological domain" description="Cytoplasmic" evidence="2">
    <location>
        <begin position="108"/>
        <end position="143"/>
    </location>
</feature>
<feature type="transmembrane region" description="Helical" evidence="2">
    <location>
        <begin position="144"/>
        <end position="164"/>
    </location>
</feature>
<feature type="topological domain" description="Extracellular" evidence="2">
    <location>
        <begin position="165"/>
        <end position="179"/>
    </location>
</feature>
<feature type="transmembrane region" description="Helical" evidence="2">
    <location>
        <begin position="180"/>
        <end position="200"/>
    </location>
</feature>
<feature type="topological domain" description="Cytoplasmic" evidence="2">
    <location>
        <begin position="201"/>
        <end position="203"/>
    </location>
</feature>
<feature type="transmembrane region" description="Helical" evidence="2">
    <location>
        <begin position="204"/>
        <end position="224"/>
    </location>
</feature>
<feature type="topological domain" description="Extracellular" evidence="2">
    <location>
        <begin position="225"/>
        <end position="241"/>
    </location>
</feature>
<feature type="transmembrane region" description="Helical" evidence="2">
    <location>
        <begin position="242"/>
        <end position="262"/>
    </location>
</feature>
<feature type="topological domain" description="Cytoplasmic" evidence="2">
    <location>
        <begin position="263"/>
        <end position="275"/>
    </location>
</feature>
<feature type="transmembrane region" description="Helical" evidence="2">
    <location>
        <begin position="276"/>
        <end position="296"/>
    </location>
</feature>
<feature type="topological domain" description="Extracellular" evidence="2">
    <location>
        <begin position="297"/>
        <end position="323"/>
    </location>
</feature>
<feature type="transmembrane region" description="Helical" evidence="2">
    <location>
        <begin position="324"/>
        <end position="344"/>
    </location>
</feature>
<feature type="topological domain" description="Cytoplasmic" evidence="2">
    <location>
        <begin position="345"/>
        <end position="365"/>
    </location>
</feature>
<feature type="transmembrane region" description="Helical" evidence="2">
    <location>
        <begin position="366"/>
        <end position="386"/>
    </location>
</feature>
<feature type="topological domain" description="Extracellular" evidence="2">
    <location>
        <position position="387"/>
    </location>
</feature>
<feature type="transmembrane region" description="Helical" evidence="2">
    <location>
        <begin position="388"/>
        <end position="408"/>
    </location>
</feature>
<feature type="topological domain" description="Cytoplasmic" evidence="2">
    <location>
        <begin position="409"/>
        <end position="433"/>
    </location>
</feature>
<feature type="transmembrane region" description="Helical" evidence="2">
    <location>
        <begin position="434"/>
        <end position="454"/>
    </location>
</feature>
<feature type="topological domain" description="Extracellular" evidence="2">
    <location>
        <begin position="455"/>
        <end position="480"/>
    </location>
</feature>
<comment type="function">
    <text evidence="1">Carrier protein involved in proton-driven auxin influx. May mediate the formation of auxin gradient from developing leaves (site of auxin biosynthesis) to tips (By similarity).</text>
</comment>
<comment type="subcellular location">
    <subcellularLocation>
        <location evidence="1">Cell membrane</location>
        <topology evidence="1">Multi-pass membrane protein</topology>
    </subcellularLocation>
</comment>
<comment type="similarity">
    <text evidence="3">Belongs to the amino acid/polyamine transporter 2 family. Amino acid/auxin permease (AAAP) (TC 2.A.18.1) subfamily.</text>
</comment>
<name>LAX14_ORYSJ</name>
<reference key="1">
    <citation type="journal article" date="2005" name="BMC Biol.">
        <title>The sequence of rice chromosomes 11 and 12, rich in disease resistance genes and recent gene duplications.</title>
        <authorList>
            <consortium name="The rice chromosomes 11 and 12 sequencing consortia"/>
        </authorList>
    </citation>
    <scope>NUCLEOTIDE SEQUENCE [LARGE SCALE GENOMIC DNA]</scope>
    <source>
        <strain>cv. Nipponbare</strain>
    </source>
</reference>
<reference key="2">
    <citation type="journal article" date="2005" name="Nature">
        <title>The map-based sequence of the rice genome.</title>
        <authorList>
            <consortium name="International rice genome sequencing project (IRGSP)"/>
        </authorList>
    </citation>
    <scope>NUCLEOTIDE SEQUENCE [LARGE SCALE GENOMIC DNA]</scope>
    <source>
        <strain>cv. Nipponbare</strain>
    </source>
</reference>
<reference key="3">
    <citation type="journal article" date="2008" name="Nucleic Acids Res.">
        <title>The rice annotation project database (RAP-DB): 2008 update.</title>
        <authorList>
            <consortium name="The rice annotation project (RAP)"/>
        </authorList>
    </citation>
    <scope>GENOME REANNOTATION</scope>
    <source>
        <strain>cv. Nipponbare</strain>
    </source>
</reference>
<reference key="4">
    <citation type="journal article" date="2013" name="Rice">
        <title>Improvement of the Oryza sativa Nipponbare reference genome using next generation sequence and optical map data.</title>
        <authorList>
            <person name="Kawahara Y."/>
            <person name="de la Bastide M."/>
            <person name="Hamilton J.P."/>
            <person name="Kanamori H."/>
            <person name="McCombie W.R."/>
            <person name="Ouyang S."/>
            <person name="Schwartz D.C."/>
            <person name="Tanaka T."/>
            <person name="Wu J."/>
            <person name="Zhou S."/>
            <person name="Childs K.L."/>
            <person name="Davidson R.M."/>
            <person name="Lin H."/>
            <person name="Quesada-Ocampo L."/>
            <person name="Vaillancourt B."/>
            <person name="Sakai H."/>
            <person name="Lee S.S."/>
            <person name="Kim J."/>
            <person name="Numa H."/>
            <person name="Itoh T."/>
            <person name="Buell C.R."/>
            <person name="Matsumoto T."/>
        </authorList>
    </citation>
    <scope>GENOME REANNOTATION</scope>
    <source>
        <strain>cv. Nipponbare</strain>
    </source>
</reference>
<proteinExistence type="inferred from homology"/>
<evidence type="ECO:0000250" key="1"/>
<evidence type="ECO:0000255" key="2"/>
<evidence type="ECO:0000305" key="3"/>
<dbReference type="EMBL" id="AC147812">
    <property type="protein sequence ID" value="AAX93011.1"/>
    <property type="molecule type" value="Genomic_DNA"/>
</dbReference>
<dbReference type="EMBL" id="DP000010">
    <property type="protein sequence ID" value="ABA91603.1"/>
    <property type="molecule type" value="Genomic_DNA"/>
</dbReference>
<dbReference type="EMBL" id="AP008217">
    <property type="protein sequence ID" value="BAF27695.1"/>
    <property type="molecule type" value="Genomic_DNA"/>
</dbReference>
<dbReference type="EMBL" id="AP014967">
    <property type="protein sequence ID" value="BAT12849.1"/>
    <property type="molecule type" value="Genomic_DNA"/>
</dbReference>
<dbReference type="RefSeq" id="XP_015617575.1">
    <property type="nucleotide sequence ID" value="XM_015762089.1"/>
</dbReference>
<dbReference type="SMR" id="Q53JG7"/>
<dbReference type="FunCoup" id="Q53JG7">
    <property type="interactions" value="1"/>
</dbReference>
<dbReference type="STRING" id="39947.Q53JG7"/>
<dbReference type="PaxDb" id="39947-Q53JG7"/>
<dbReference type="EnsemblPlants" id="Os11t0169200-00">
    <property type="protein sequence ID" value="Os11t0169200-00"/>
    <property type="gene ID" value="Os11g0169200"/>
</dbReference>
<dbReference type="Gramene" id="Os11t0169200-00">
    <property type="protein sequence ID" value="Os11t0169200-00"/>
    <property type="gene ID" value="Os11g0169200"/>
</dbReference>
<dbReference type="KEGG" id="dosa:Os11g0169200"/>
<dbReference type="eggNOG" id="KOG1303">
    <property type="taxonomic scope" value="Eukaryota"/>
</dbReference>
<dbReference type="HOGENOM" id="CLU_027994_2_0_1"/>
<dbReference type="InParanoid" id="Q53JG7"/>
<dbReference type="OMA" id="QRFKMIY"/>
<dbReference type="OrthoDB" id="40134at2759"/>
<dbReference type="Proteomes" id="UP000000763">
    <property type="component" value="Chromosome 11"/>
</dbReference>
<dbReference type="Proteomes" id="UP000059680">
    <property type="component" value="Chromosome 11"/>
</dbReference>
<dbReference type="GO" id="GO:0016020">
    <property type="term" value="C:membrane"/>
    <property type="evidence" value="ECO:0000318"/>
    <property type="project" value="GO_Central"/>
</dbReference>
<dbReference type="GO" id="GO:0005886">
    <property type="term" value="C:plasma membrane"/>
    <property type="evidence" value="ECO:0007669"/>
    <property type="project" value="UniProtKB-SubCell"/>
</dbReference>
<dbReference type="GO" id="GO:0015171">
    <property type="term" value="F:amino acid transmembrane transporter activity"/>
    <property type="evidence" value="ECO:0000318"/>
    <property type="project" value="GO_Central"/>
</dbReference>
<dbReference type="GO" id="GO:0015293">
    <property type="term" value="F:symporter activity"/>
    <property type="evidence" value="ECO:0007669"/>
    <property type="project" value="UniProtKB-KW"/>
</dbReference>
<dbReference type="GO" id="GO:0003333">
    <property type="term" value="P:amino acid transmembrane transport"/>
    <property type="evidence" value="ECO:0000318"/>
    <property type="project" value="GO_Central"/>
</dbReference>
<dbReference type="GO" id="GO:0009734">
    <property type="term" value="P:auxin-activated signaling pathway"/>
    <property type="evidence" value="ECO:0007669"/>
    <property type="project" value="UniProtKB-KW"/>
</dbReference>
<dbReference type="InterPro" id="IPR013057">
    <property type="entry name" value="AA_transpt_TM"/>
</dbReference>
<dbReference type="PANTHER" id="PTHR48017">
    <property type="entry name" value="OS05G0424000 PROTEIN-RELATED"/>
    <property type="match status" value="1"/>
</dbReference>
<dbReference type="Pfam" id="PF01490">
    <property type="entry name" value="Aa_trans"/>
    <property type="match status" value="1"/>
</dbReference>